<organism evidence="15">
    <name type="scientific">Candida glabrata (strain ATCC 2001 / BCRC 20586 / JCM 3761 / NBRC 0622 / NRRL Y-65 / CBS 138)</name>
    <name type="common">Yeast</name>
    <name type="synonym">Nakaseomyces glabratus</name>
    <dbReference type="NCBI Taxonomy" id="284593"/>
    <lineage>
        <taxon>Eukaryota</taxon>
        <taxon>Fungi</taxon>
        <taxon>Dikarya</taxon>
        <taxon>Ascomycota</taxon>
        <taxon>Saccharomycotina</taxon>
        <taxon>Saccharomycetes</taxon>
        <taxon>Saccharomycetales</taxon>
        <taxon>Saccharomycetaceae</taxon>
        <taxon>Nakaseomyces</taxon>
    </lineage>
</organism>
<evidence type="ECO:0000255" key="1"/>
<evidence type="ECO:0000255" key="2">
    <source>
        <dbReference type="PROSITE-ProRule" id="PRU00498"/>
    </source>
</evidence>
<evidence type="ECO:0000256" key="3">
    <source>
        <dbReference type="SAM" id="MobiDB-lite"/>
    </source>
</evidence>
<evidence type="ECO:0000269" key="4">
    <source>
    </source>
</evidence>
<evidence type="ECO:0000269" key="5">
    <source>
    </source>
</evidence>
<evidence type="ECO:0000269" key="6">
    <source>
    </source>
</evidence>
<evidence type="ECO:0000269" key="7">
    <source>
    </source>
</evidence>
<evidence type="ECO:0000269" key="8">
    <source>
    </source>
</evidence>
<evidence type="ECO:0000303" key="9">
    <source>
    </source>
</evidence>
<evidence type="ECO:0000303" key="10">
    <source>
    </source>
</evidence>
<evidence type="ECO:0000303" key="11">
    <source>
    </source>
</evidence>
<evidence type="ECO:0000303" key="12">
    <source>
    </source>
</evidence>
<evidence type="ECO:0000305" key="13"/>
<evidence type="ECO:0000312" key="14">
    <source>
        <dbReference type="CGD" id="CAL0134003"/>
    </source>
</evidence>
<evidence type="ECO:0000312" key="15">
    <source>
        <dbReference type="Proteomes" id="UP000002428"/>
    </source>
</evidence>
<reference evidence="15" key="1">
    <citation type="journal article" date="2004" name="Nature">
        <title>Genome evolution in yeasts.</title>
        <authorList>
            <person name="Dujon B."/>
            <person name="Sherman D."/>
            <person name="Fischer G."/>
            <person name="Durrens P."/>
            <person name="Casaregola S."/>
            <person name="Lafontaine I."/>
            <person name="de Montigny J."/>
            <person name="Marck C."/>
            <person name="Neuveglise C."/>
            <person name="Talla E."/>
            <person name="Goffard N."/>
            <person name="Frangeul L."/>
            <person name="Aigle M."/>
            <person name="Anthouard V."/>
            <person name="Babour A."/>
            <person name="Barbe V."/>
            <person name="Barnay S."/>
            <person name="Blanchin S."/>
            <person name="Beckerich J.-M."/>
            <person name="Beyne E."/>
            <person name="Bleykasten C."/>
            <person name="Boisrame A."/>
            <person name="Boyer J."/>
            <person name="Cattolico L."/>
            <person name="Confanioleri F."/>
            <person name="de Daruvar A."/>
            <person name="Despons L."/>
            <person name="Fabre E."/>
            <person name="Fairhead C."/>
            <person name="Ferry-Dumazet H."/>
            <person name="Groppi A."/>
            <person name="Hantraye F."/>
            <person name="Hennequin C."/>
            <person name="Jauniaux N."/>
            <person name="Joyet P."/>
            <person name="Kachouri R."/>
            <person name="Kerrest A."/>
            <person name="Koszul R."/>
            <person name="Lemaire M."/>
            <person name="Lesur I."/>
            <person name="Ma L."/>
            <person name="Muller H."/>
            <person name="Nicaud J.-M."/>
            <person name="Nikolski M."/>
            <person name="Oztas S."/>
            <person name="Ozier-Kalogeropoulos O."/>
            <person name="Pellenz S."/>
            <person name="Potier S."/>
            <person name="Richard G.-F."/>
            <person name="Straub M.-L."/>
            <person name="Suleau A."/>
            <person name="Swennen D."/>
            <person name="Tekaia F."/>
            <person name="Wesolowski-Louvel M."/>
            <person name="Westhof E."/>
            <person name="Wirth B."/>
            <person name="Zeniou-Meyer M."/>
            <person name="Zivanovic Y."/>
            <person name="Bolotin-Fukuhara M."/>
            <person name="Thierry A."/>
            <person name="Bouchier C."/>
            <person name="Caudron B."/>
            <person name="Scarpelli C."/>
            <person name="Gaillardin C."/>
            <person name="Weissenbach J."/>
            <person name="Wincker P."/>
            <person name="Souciet J.-L."/>
        </authorList>
    </citation>
    <scope>NUCLEOTIDE SEQUENCE [LARGE SCALE GENOMIC DNA]</scope>
    <source>
        <strain>ATCC 2001 / BCRC 20586 / JCM 3761 / NBRC 0622 / NRRL Y-65 / CBS 138</strain>
    </source>
</reference>
<reference evidence="13" key="2">
    <citation type="journal article" date="2008" name="Eukaryot. Cell">
        <title>The cell wall of the human pathogen Candida glabrata: differential incorporation of novel adhesin-like wall proteins.</title>
        <authorList>
            <person name="de Groot P.W."/>
            <person name="Kraneveld E.A."/>
            <person name="Yin Q.Y."/>
            <person name="Dekker H.L."/>
            <person name="Gross U."/>
            <person name="Crielaard W."/>
            <person name="de Koster C.G."/>
            <person name="Bader O."/>
            <person name="Klis F.M."/>
            <person name="Weig M."/>
        </authorList>
    </citation>
    <scope>PROTEIN SEQUENCE OF 71-84; 160-168; 259-280 AND 302-314</scope>
    <scope>IDENTIFICATION BY MASS SPECTROMETRY</scope>
    <scope>SUBCELLULAR LOCATION</scope>
</reference>
<reference evidence="13" key="3">
    <citation type="journal article" date="2011" name="Mycopathologia">
        <title>Identification and differential gene expression of adhesin-like wall proteins in Candida glabrata biofilms.</title>
        <authorList>
            <person name="Kraneveld E.A."/>
            <person name="de Soet J.J."/>
            <person name="Deng D.M."/>
            <person name="Dekker H.L."/>
            <person name="de Koster C.G."/>
            <person name="Klis F.M."/>
            <person name="Crielaard W."/>
            <person name="de Groot P.W."/>
        </authorList>
    </citation>
    <scope>PROTEIN SEQUENCE OF 71-123 AND 160-168</scope>
    <scope>IDENTIFICATION BY MASS SPECTROMETRY</scope>
    <scope>SUBCELLULAR LOCATION</scope>
    <scope>INDUCTION</scope>
</reference>
<reference evidence="13" key="4">
    <citation type="journal article" date="2015" name="FEMS Yeast Res.">
        <title>Proteomic analysis of hyperadhesive Candida glabrata clinical isolates reveals a core wall proteome and differential incorporation of adhesins.</title>
        <authorList>
            <person name="Gomez-Molero E."/>
            <person name="de Boer A.D."/>
            <person name="Dekker H.L."/>
            <person name="Moreno-Martinez A."/>
            <person name="Kraneveld E.A."/>
            <person name="Ichsan I."/>
            <person name="Chauhan N."/>
            <person name="Weig M."/>
            <person name="de Soet J.J."/>
            <person name="de Koster C.G."/>
            <person name="Bader O."/>
            <person name="de Groot P.W."/>
        </authorList>
    </citation>
    <scope>PROTEIN SEQUENCE OF 74-84; 100-112; 114-123; 160-168 AND 302-314</scope>
    <scope>IDENTIFICATION BY MASS SPECTROMETRY</scope>
    <scope>SUBCELLULAR LOCATION</scope>
</reference>
<reference evidence="13" key="5">
    <citation type="journal article" date="2015" name="J. Antimicrob. Chemother.">
        <title>In vivo Candida glabrata biofilm development on foreign bodies in a rat subcutaneous model.</title>
        <authorList>
            <person name="Kucharikova S."/>
            <person name="Neirinck B."/>
            <person name="Sharma N."/>
            <person name="Vleugels J."/>
            <person name="Lagrou K."/>
            <person name="Van Dijck P."/>
        </authorList>
    </citation>
    <scope>INDUCTION</scope>
</reference>
<reference evidence="13" key="6">
    <citation type="journal article" date="2021" name="PLoS Pathog.">
        <title>A novel class of Candida glabrata cell wall proteins with beta-helix fold mediates adhesion in clinical isolates.</title>
        <authorList>
            <person name="Reithofer V."/>
            <person name="Fernandez-Pereira J."/>
            <person name="Alvarado M."/>
            <person name="de Groot P."/>
            <person name="Essen L.O."/>
        </authorList>
    </citation>
    <scope>FUNCTION</scope>
</reference>
<proteinExistence type="evidence at protein level"/>
<gene>
    <name evidence="9" type="primary">AWP2</name>
    <name evidence="14" type="ordered locus">CAGL0K00110g</name>
</gene>
<sequence length="832" mass="89380">MRKLPLFMAWKFWLICLYIIKVASTQIVIKSNTIVGGNNPSGFQNGYIVSGDAFLAFQDMNTVPMYQTVRIDKGGALYYINNDKQGFSILSDHNYNHPFVFLNEGTVVVDDRRSISPGSWTIKDGSFTNNGNIMFTSSQGDIFSIGSNYITNTGFIFSKGTSFEKPQRLQIGNGNIWINTGTVCMANTTYILENAIQGGGCISVGENSVFNIYSFDMQQQTVYLSHPSSVLILNGGHEVPVYGLGNGNGILYPDAPIRDIYYDSSTGIMDVTAGTNGIYKFTVYIGAGYNESNFEIVSSIKIHGISYDNYNFVRYRGPPPNLAPSVCQPCVEIPLYSFQVPDPYTTTNELGFSETVSFYSTYNENDIPVIGNTTIYVPPAIYTLTKVNENTTETDIISRVTGMGYNGLPFTYYTTITVGEMETGVVTKTITITENKSRSTKTTLMSRNYTFSFSNYSPISSSGTYSVSTVDNITTLTDTVANVSSSGPNSIVTATMTTYQNNHEFNNASVINVTNSSNIMVPITSTFYSSVDSNLTTPITSLTRTSQSQIVSHITKLASSINETTIANTFPSPAASGTNYTTVVTNAEGSVQTDIVSHITTTDSDGKPTTIVSHITTTDSDGKPTTIVTTFPAPAASGADYTTVVTNADGSVETDIVSHITTKDSIGKPTTVVTTVPYTLCASNADYTTVVTKSNVSVETEVVSHITTTAPCSDLESHVENQTTSPSMHTTSLVGSENGVSAKTVNDKPNPTIFTEVAVSEGTTSNAGYVTDQGSSLEMFAPTGASAVESGNKVSQTQTASIFHGAGSTFKIKFNTILLSTSLTILILLGMA</sequence>
<keyword id="KW-0130">Cell adhesion</keyword>
<keyword id="KW-0134">Cell wall</keyword>
<keyword id="KW-0903">Direct protein sequencing</keyword>
<keyword id="KW-0325">Glycoprotein</keyword>
<keyword id="KW-1185">Reference proteome</keyword>
<keyword id="KW-0964">Secreted</keyword>
<keyword id="KW-0732">Signal</keyword>
<protein>
    <recommendedName>
        <fullName evidence="12">Adhesin AWP2</fullName>
    </recommendedName>
</protein>
<accession>Q6FNG1</accession>
<name>AWP2_CANGA</name>
<comment type="function">
    <text evidence="8">Mediates cell-substrate adhesion and promotes biofilm formation.</text>
</comment>
<comment type="subcellular location">
    <subcellularLocation>
        <location evidence="4 5 7">Secreted</location>
        <location evidence="4 5 7">Cell wall</location>
    </subcellularLocation>
    <text evidence="9 10 11">May be GPI-anchored.</text>
</comment>
<comment type="induction">
    <text evidence="5 6">Induced during biofilm formation on catheters inside the host (PubMed:25406296). May be repressed during biofilm formation ex vivo (PubMed:21769633).</text>
</comment>
<dbReference type="EMBL" id="CR380957">
    <property type="protein sequence ID" value="CAG61192.1"/>
    <property type="molecule type" value="Genomic_DNA"/>
</dbReference>
<dbReference type="RefSeq" id="XP_448233.1">
    <property type="nucleotide sequence ID" value="XM_448233.1"/>
</dbReference>
<dbReference type="SMR" id="Q6FNG1"/>
<dbReference type="STRING" id="284593.Q6FNG1"/>
<dbReference type="GlyCosmos" id="Q6FNG1">
    <property type="glycosylation" value="16 sites, No reported glycans"/>
</dbReference>
<dbReference type="EnsemblFungi" id="CAGL0K00110g-T">
    <property type="protein sequence ID" value="CAGL0K00110g-T-p1"/>
    <property type="gene ID" value="CAGL0K00110g"/>
</dbReference>
<dbReference type="GeneID" id="2889957"/>
<dbReference type="KEGG" id="cgr:2889957"/>
<dbReference type="CGD" id="CAL0134003">
    <property type="gene designation" value="AWP2"/>
</dbReference>
<dbReference type="VEuPathDB" id="FungiDB:CAGL0K00110g"/>
<dbReference type="eggNOG" id="KOG1216">
    <property type="taxonomic scope" value="Eukaryota"/>
</dbReference>
<dbReference type="HOGENOM" id="CLU_340973_0_0_1"/>
<dbReference type="InParanoid" id="Q6FNG1"/>
<dbReference type="OMA" id="TITIYLH"/>
<dbReference type="Proteomes" id="UP000002428">
    <property type="component" value="Chromosome K"/>
</dbReference>
<dbReference type="GO" id="GO:0005576">
    <property type="term" value="C:extracellular region"/>
    <property type="evidence" value="ECO:0007669"/>
    <property type="project" value="UniProtKB-KW"/>
</dbReference>
<dbReference type="GO" id="GO:0009277">
    <property type="term" value="C:fungal-type cell wall"/>
    <property type="evidence" value="ECO:0000314"/>
    <property type="project" value="UniProtKB"/>
</dbReference>
<dbReference type="GO" id="GO:0098631">
    <property type="term" value="F:cell adhesion mediator activity"/>
    <property type="evidence" value="ECO:0000315"/>
    <property type="project" value="UniProtKB"/>
</dbReference>
<dbReference type="GO" id="GO:0043708">
    <property type="term" value="P:cell adhesion involved in biofilm formation"/>
    <property type="evidence" value="ECO:0000315"/>
    <property type="project" value="UniProtKB"/>
</dbReference>
<dbReference type="GO" id="GO:0098609">
    <property type="term" value="P:cell-cell adhesion"/>
    <property type="evidence" value="ECO:0000315"/>
    <property type="project" value="CGD"/>
</dbReference>
<dbReference type="InterPro" id="IPR049451">
    <property type="entry name" value="AWP2-like_YTTT_rpt"/>
</dbReference>
<dbReference type="InterPro" id="IPR021031">
    <property type="entry name" value="Hyphal-reg_cell_wall_N"/>
</dbReference>
<dbReference type="Pfam" id="PF20646">
    <property type="entry name" value="Hpf1_C"/>
    <property type="match status" value="4"/>
</dbReference>
<dbReference type="Pfam" id="PF11765">
    <property type="entry name" value="Hyphal_reg_CWP"/>
    <property type="match status" value="1"/>
</dbReference>
<feature type="signal peptide" evidence="1">
    <location>
        <begin position="1"/>
        <end position="25"/>
    </location>
</feature>
<feature type="chain" id="PRO_5004273371" description="Adhesin AWP2" evidence="1">
    <location>
        <begin position="26"/>
        <end position="832"/>
    </location>
</feature>
<feature type="region of interest" description="Disordered" evidence="3">
    <location>
        <begin position="722"/>
        <end position="747"/>
    </location>
</feature>
<feature type="glycosylation site" description="N-linked (GlcNAc...) asparagine" evidence="2">
    <location>
        <position position="187"/>
    </location>
</feature>
<feature type="glycosylation site" description="N-linked (GlcNAc...) asparagine" evidence="2">
    <location>
        <position position="290"/>
    </location>
</feature>
<feature type="glycosylation site" description="N-linked (GlcNAc...) asparagine" evidence="2">
    <location>
        <position position="372"/>
    </location>
</feature>
<feature type="glycosylation site" description="N-linked (GlcNAc...) asparagine" evidence="2">
    <location>
        <position position="390"/>
    </location>
</feature>
<feature type="glycosylation site" description="N-linked (GlcNAc...) asparagine" evidence="2">
    <location>
        <position position="435"/>
    </location>
</feature>
<feature type="glycosylation site" description="N-linked (GlcNAc...) asparagine" evidence="2">
    <location>
        <position position="448"/>
    </location>
</feature>
<feature type="glycosylation site" description="N-linked (GlcNAc...) asparagine" evidence="2">
    <location>
        <position position="472"/>
    </location>
</feature>
<feature type="glycosylation site" description="N-linked (GlcNAc...) asparagine" evidence="2">
    <location>
        <position position="482"/>
    </location>
</feature>
<feature type="glycosylation site" description="N-linked (GlcNAc...) asparagine" evidence="2">
    <location>
        <position position="507"/>
    </location>
</feature>
<feature type="glycosylation site" description="N-linked (GlcNAc...) asparagine" evidence="2">
    <location>
        <position position="512"/>
    </location>
</feature>
<feature type="glycosylation site" description="N-linked (GlcNAc...) asparagine" evidence="2">
    <location>
        <position position="515"/>
    </location>
</feature>
<feature type="glycosylation site" description="N-linked (GlcNAc...) asparagine" evidence="2">
    <location>
        <position position="534"/>
    </location>
</feature>
<feature type="glycosylation site" description="N-linked (GlcNAc...) asparagine" evidence="2">
    <location>
        <position position="562"/>
    </location>
</feature>
<feature type="glycosylation site" description="N-linked (GlcNAc...) asparagine" evidence="2">
    <location>
        <position position="579"/>
    </location>
</feature>
<feature type="glycosylation site" description="N-linked (GlcNAc...) asparagine" evidence="2">
    <location>
        <position position="695"/>
    </location>
</feature>
<feature type="glycosylation site" description="N-linked (GlcNAc...) asparagine" evidence="2">
    <location>
        <position position="721"/>
    </location>
</feature>